<name>CBID_CLOK5</name>
<feature type="chain" id="PRO_1000083591" description="Cobalt-precorrin-5B C(1)-methyltransferase">
    <location>
        <begin position="1"/>
        <end position="365"/>
    </location>
</feature>
<organism>
    <name type="scientific">Clostridium kluyveri (strain ATCC 8527 / DSM 555 / NBRC 12016 / NCIMB 10680 / K1)</name>
    <dbReference type="NCBI Taxonomy" id="431943"/>
    <lineage>
        <taxon>Bacteria</taxon>
        <taxon>Bacillati</taxon>
        <taxon>Bacillota</taxon>
        <taxon>Clostridia</taxon>
        <taxon>Eubacteriales</taxon>
        <taxon>Clostridiaceae</taxon>
        <taxon>Clostridium</taxon>
    </lineage>
</organism>
<reference key="1">
    <citation type="journal article" date="2008" name="Proc. Natl. Acad. Sci. U.S.A.">
        <title>The genome of Clostridium kluyveri, a strict anaerobe with unique metabolic features.</title>
        <authorList>
            <person name="Seedorf H."/>
            <person name="Fricke W.F."/>
            <person name="Veith B."/>
            <person name="Brueggemann H."/>
            <person name="Liesegang H."/>
            <person name="Strittmatter A."/>
            <person name="Miethke M."/>
            <person name="Buckel W."/>
            <person name="Hinderberger J."/>
            <person name="Li F."/>
            <person name="Hagemeier C."/>
            <person name="Thauer R.K."/>
            <person name="Gottschalk G."/>
        </authorList>
    </citation>
    <scope>NUCLEOTIDE SEQUENCE [LARGE SCALE GENOMIC DNA]</scope>
    <source>
        <strain>ATCC 8527 / DSM 555 / NBRC 12016 / NCIMB 10680 / K1</strain>
    </source>
</reference>
<protein>
    <recommendedName>
        <fullName evidence="1">Cobalt-precorrin-5B C(1)-methyltransferase</fullName>
        <ecNumber evidence="1">2.1.1.195</ecNumber>
    </recommendedName>
    <alternativeName>
        <fullName evidence="1">Cobalt-precorrin-6A synthase</fullName>
    </alternativeName>
</protein>
<evidence type="ECO:0000255" key="1">
    <source>
        <dbReference type="HAMAP-Rule" id="MF_00787"/>
    </source>
</evidence>
<dbReference type="EC" id="2.1.1.195" evidence="1"/>
<dbReference type="EMBL" id="CP000673">
    <property type="protein sequence ID" value="EDK32777.1"/>
    <property type="molecule type" value="Genomic_DNA"/>
</dbReference>
<dbReference type="RefSeq" id="WP_011989292.1">
    <property type="nucleotide sequence ID" value="NC_009706.1"/>
</dbReference>
<dbReference type="SMR" id="A5N646"/>
<dbReference type="STRING" id="431943.CKL_0724"/>
<dbReference type="KEGG" id="ckl:CKL_0724"/>
<dbReference type="eggNOG" id="COG1903">
    <property type="taxonomic scope" value="Bacteria"/>
</dbReference>
<dbReference type="HOGENOM" id="CLU_041273_1_0_9"/>
<dbReference type="UniPathway" id="UPA00148">
    <property type="reaction ID" value="UER00227"/>
</dbReference>
<dbReference type="Proteomes" id="UP000002411">
    <property type="component" value="Chromosome"/>
</dbReference>
<dbReference type="GO" id="GO:0043780">
    <property type="term" value="F:cobalt-precorrin-5B C1-methyltransferase activity"/>
    <property type="evidence" value="ECO:0007669"/>
    <property type="project" value="RHEA"/>
</dbReference>
<dbReference type="GO" id="GO:0019251">
    <property type="term" value="P:anaerobic cobalamin biosynthetic process"/>
    <property type="evidence" value="ECO:0007669"/>
    <property type="project" value="UniProtKB-UniRule"/>
</dbReference>
<dbReference type="GO" id="GO:0032259">
    <property type="term" value="P:methylation"/>
    <property type="evidence" value="ECO:0007669"/>
    <property type="project" value="UniProtKB-KW"/>
</dbReference>
<dbReference type="Gene3D" id="3.30.2110.10">
    <property type="entry name" value="CbiD-like"/>
    <property type="match status" value="1"/>
</dbReference>
<dbReference type="HAMAP" id="MF_00787">
    <property type="entry name" value="CbiD"/>
    <property type="match status" value="1"/>
</dbReference>
<dbReference type="InterPro" id="IPR002748">
    <property type="entry name" value="CbiD"/>
</dbReference>
<dbReference type="InterPro" id="IPR036074">
    <property type="entry name" value="CbiD_sf"/>
</dbReference>
<dbReference type="NCBIfam" id="TIGR00312">
    <property type="entry name" value="cbiD"/>
    <property type="match status" value="1"/>
</dbReference>
<dbReference type="PANTHER" id="PTHR35863">
    <property type="entry name" value="COBALT-PRECORRIN-5B C(1)-METHYLTRANSFERASE"/>
    <property type="match status" value="1"/>
</dbReference>
<dbReference type="PANTHER" id="PTHR35863:SF1">
    <property type="entry name" value="COBALT-PRECORRIN-5B C(1)-METHYLTRANSFERASE"/>
    <property type="match status" value="1"/>
</dbReference>
<dbReference type="Pfam" id="PF01888">
    <property type="entry name" value="CbiD"/>
    <property type="match status" value="1"/>
</dbReference>
<dbReference type="PIRSF" id="PIRSF026782">
    <property type="entry name" value="CbiD"/>
    <property type="match status" value="1"/>
</dbReference>
<dbReference type="SUPFAM" id="SSF111342">
    <property type="entry name" value="CbiD-like"/>
    <property type="match status" value="1"/>
</dbReference>
<gene>
    <name evidence="1" type="primary">cbiD</name>
    <name type="ordered locus">CKL_0724</name>
</gene>
<sequence>MFDLYINCGGKKLRCGYTTGSCAAAAAKAAAKMLYSQENLEHISINTPKNVELDLHIESVKKGSDYVECCVIKDGGDDPDVTNGIEIWARAEKSEKEYTLKAGIGIGIVKGEGLYVKKGDFAINPVPRIMIEKEVRKVLPQGKGVTITIFVPEGEKIAKKTFNPRLNIVGGISILGTTGIVVPMSEEALKESVKLEISQKVASGYKDLILLFGNMGEDKARELGMDIKKSVIMSNYVGFALECCVENKIEKILIVGHIGKLSKIAAGCFNTHSRVCDVRLEVMALELALMGADKKIVEAVYNEKTTEGAVKIISEEYKDIYERIGYKIKKRIEDFTYGALKAEVIMYCMASGILWDGRSKIDENN</sequence>
<proteinExistence type="inferred from homology"/>
<accession>A5N646</accession>
<keyword id="KW-0169">Cobalamin biosynthesis</keyword>
<keyword id="KW-0489">Methyltransferase</keyword>
<keyword id="KW-1185">Reference proteome</keyword>
<keyword id="KW-0949">S-adenosyl-L-methionine</keyword>
<keyword id="KW-0808">Transferase</keyword>
<comment type="function">
    <text evidence="1">Catalyzes the methylation of C-1 in cobalt-precorrin-5B to form cobalt-precorrin-6A.</text>
</comment>
<comment type="catalytic activity">
    <reaction evidence="1">
        <text>Co-precorrin-5B + S-adenosyl-L-methionine = Co-precorrin-6A + S-adenosyl-L-homocysteine</text>
        <dbReference type="Rhea" id="RHEA:26285"/>
        <dbReference type="ChEBI" id="CHEBI:57856"/>
        <dbReference type="ChEBI" id="CHEBI:59789"/>
        <dbReference type="ChEBI" id="CHEBI:60063"/>
        <dbReference type="ChEBI" id="CHEBI:60064"/>
        <dbReference type="EC" id="2.1.1.195"/>
    </reaction>
</comment>
<comment type="pathway">
    <text evidence="1">Cofactor biosynthesis; adenosylcobalamin biosynthesis; cob(II)yrinate a,c-diamide from sirohydrochlorin (anaerobic route): step 6/10.</text>
</comment>
<comment type="similarity">
    <text evidence="1">Belongs to the CbiD family.</text>
</comment>